<dbReference type="EC" id="3.6.-.-" evidence="3"/>
<dbReference type="EMBL" id="AL123456">
    <property type="protein sequence ID" value="CCP46272.1"/>
    <property type="molecule type" value="Genomic_DNA"/>
</dbReference>
<dbReference type="PIR" id="G70564">
    <property type="entry name" value="G70564"/>
</dbReference>
<dbReference type="RefSeq" id="NP_217967.1">
    <property type="nucleotide sequence ID" value="NC_000962.3"/>
</dbReference>
<dbReference type="RefSeq" id="WP_003418333.1">
    <property type="nucleotide sequence ID" value="NZ_NVQJ01000065.1"/>
</dbReference>
<dbReference type="SMR" id="P9WNR1"/>
<dbReference type="STRING" id="83332.Rv3450c"/>
<dbReference type="PaxDb" id="83332-Rv3450c"/>
<dbReference type="DNASU" id="887619"/>
<dbReference type="GeneID" id="887619"/>
<dbReference type="KEGG" id="mtu:Rv3450c"/>
<dbReference type="KEGG" id="mtv:RVBD_3450c"/>
<dbReference type="TubercuList" id="Rv3450c"/>
<dbReference type="eggNOG" id="COG3266">
    <property type="taxonomic scope" value="Bacteria"/>
</dbReference>
<dbReference type="InParanoid" id="P9WNR1"/>
<dbReference type="OrthoDB" id="3847604at2"/>
<dbReference type="PhylomeDB" id="P9WNR1"/>
<dbReference type="Proteomes" id="UP000001584">
    <property type="component" value="Chromosome"/>
</dbReference>
<dbReference type="GO" id="GO:0005886">
    <property type="term" value="C:plasma membrane"/>
    <property type="evidence" value="ECO:0007669"/>
    <property type="project" value="UniProtKB-SubCell"/>
</dbReference>
<dbReference type="GO" id="GO:0005524">
    <property type="term" value="F:ATP binding"/>
    <property type="evidence" value="ECO:0007669"/>
    <property type="project" value="UniProtKB-KW"/>
</dbReference>
<dbReference type="GO" id="GO:0016787">
    <property type="term" value="F:hydrolase activity"/>
    <property type="evidence" value="ECO:0007669"/>
    <property type="project" value="UniProtKB-KW"/>
</dbReference>
<dbReference type="Gene3D" id="3.30.2390.20">
    <property type="entry name" value="Type VII secretion system EccB, repeat 1 domain"/>
    <property type="match status" value="1"/>
</dbReference>
<dbReference type="Gene3D" id="2.40.50.910">
    <property type="entry name" value="Type VII secretion system EccB, repeat 3 domain"/>
    <property type="match status" value="1"/>
</dbReference>
<dbReference type="InterPro" id="IPR007795">
    <property type="entry name" value="T7SS_EccB"/>
</dbReference>
<dbReference type="InterPro" id="IPR044857">
    <property type="entry name" value="T7SS_EccB_R1"/>
</dbReference>
<dbReference type="InterPro" id="IPR042485">
    <property type="entry name" value="T7SS_EccB_R3"/>
</dbReference>
<dbReference type="NCBIfam" id="TIGR03919">
    <property type="entry name" value="T7SS_EccB"/>
    <property type="match status" value="1"/>
</dbReference>
<dbReference type="PANTHER" id="PTHR40765">
    <property type="entry name" value="ESX-2 SECRETION SYSTEM ATPASE ECCB2"/>
    <property type="match status" value="1"/>
</dbReference>
<dbReference type="PANTHER" id="PTHR40765:SF2">
    <property type="entry name" value="ESX-2 SECRETION SYSTEM ATPASE ECCB2"/>
    <property type="match status" value="1"/>
</dbReference>
<dbReference type="Pfam" id="PF05108">
    <property type="entry name" value="T7SS_ESX1_EccB"/>
    <property type="match status" value="1"/>
</dbReference>
<keyword id="KW-0067">ATP-binding</keyword>
<keyword id="KW-1003">Cell membrane</keyword>
<keyword id="KW-0378">Hydrolase</keyword>
<keyword id="KW-0472">Membrane</keyword>
<keyword id="KW-0547">Nucleotide-binding</keyword>
<keyword id="KW-1185">Reference proteome</keyword>
<keyword id="KW-0812">Transmembrane</keyword>
<keyword id="KW-1133">Transmembrane helix</keyword>
<sequence>MPSPATTWLHVSGYRFLLRRIECALLFGDVCAATGALRARTTSLALGCVLAIVAAMGCAFVALLRPQSALGQAPIVMGRESGALYVRVDDVWHPVLNLASARLIAATNANPQPVSESELGHTKRGPLLGIPGAPQLLDQPLAGAESAWAICDSDNGGSTTVVVGPAEDSSAQVLTAEQMILVATESGSPTYLLYGGRRAVVDLADPAVVWALRLQGRVPHVVAQSLLNAVPEAPRITAPRIRGGGRASVGLPGFLVGGVVRITRASGDEYYVVLEDGVQRIGQVAADLLRFGDSQGSVNVPTVAPDVIRVAPIVNTLPVSAFPDRPPTPVDGSPGRAVTTLCVTWTPAQPGAARVAFLAGSGPPVPLGGVPVTLAQADGRGPALDAVYLPPGRSAYVAARSLSGGGTGTRYLVTDTGVRFAIHDDDVAHDLGLPTAAIPAPWPVLATLPSGPELSRANASVARDTVAPGP</sequence>
<evidence type="ECO:0000250" key="1">
    <source>
        <dbReference type="UniProtKB" id="P9WNR7"/>
    </source>
</evidence>
<evidence type="ECO:0000255" key="2"/>
<evidence type="ECO:0000305" key="3"/>
<proteinExistence type="inferred from homology"/>
<protein>
    <recommendedName>
        <fullName>ESX-4 secretion system ATPase EccB4</fullName>
        <ecNumber evidence="3">3.6.-.-</ecNumber>
    </recommendedName>
    <alternativeName>
        <fullName>ESX conserved component B4</fullName>
    </alternativeName>
    <alternativeName>
        <fullName>Type VII secretion system protein EccB4</fullName>
        <shortName>T7SS protein EccB4</shortName>
    </alternativeName>
</protein>
<reference key="1">
    <citation type="journal article" date="1998" name="Nature">
        <title>Deciphering the biology of Mycobacterium tuberculosis from the complete genome sequence.</title>
        <authorList>
            <person name="Cole S.T."/>
            <person name="Brosch R."/>
            <person name="Parkhill J."/>
            <person name="Garnier T."/>
            <person name="Churcher C.M."/>
            <person name="Harris D.E."/>
            <person name="Gordon S.V."/>
            <person name="Eiglmeier K."/>
            <person name="Gas S."/>
            <person name="Barry C.E. III"/>
            <person name="Tekaia F."/>
            <person name="Badcock K."/>
            <person name="Basham D."/>
            <person name="Brown D."/>
            <person name="Chillingworth T."/>
            <person name="Connor R."/>
            <person name="Davies R.M."/>
            <person name="Devlin K."/>
            <person name="Feltwell T."/>
            <person name="Gentles S."/>
            <person name="Hamlin N."/>
            <person name="Holroyd S."/>
            <person name="Hornsby T."/>
            <person name="Jagels K."/>
            <person name="Krogh A."/>
            <person name="McLean J."/>
            <person name="Moule S."/>
            <person name="Murphy L.D."/>
            <person name="Oliver S."/>
            <person name="Osborne J."/>
            <person name="Quail M.A."/>
            <person name="Rajandream M.A."/>
            <person name="Rogers J."/>
            <person name="Rutter S."/>
            <person name="Seeger K."/>
            <person name="Skelton S."/>
            <person name="Squares S."/>
            <person name="Squares R."/>
            <person name="Sulston J.E."/>
            <person name="Taylor K."/>
            <person name="Whitehead S."/>
            <person name="Barrell B.G."/>
        </authorList>
    </citation>
    <scope>NUCLEOTIDE SEQUENCE [LARGE SCALE GENOMIC DNA]</scope>
    <source>
        <strain>ATCC 25618 / H37Rv</strain>
    </source>
</reference>
<reference key="2">
    <citation type="journal article" date="2009" name="PLoS Pathog.">
        <title>Systematic genetic nomenclature for type VII secretion systems.</title>
        <authorList>
            <person name="Bitter W."/>
            <person name="Houben E.N."/>
            <person name="Bottai D."/>
            <person name="Brodin P."/>
            <person name="Brown E.J."/>
            <person name="Cox J.S."/>
            <person name="Derbyshire K."/>
            <person name="Fortune S.M."/>
            <person name="Gao L.Y."/>
            <person name="Liu J."/>
            <person name="Gey van Pittius N.C."/>
            <person name="Pym A.S."/>
            <person name="Rubin E.J."/>
            <person name="Sherman D.R."/>
            <person name="Cole S.T."/>
            <person name="Brosch R."/>
        </authorList>
    </citation>
    <scope>GENE NAME</scope>
</reference>
<name>ECCB4_MYCTU</name>
<feature type="chain" id="PRO_0000393231" description="ESX-4 secretion system ATPase EccB4">
    <location>
        <begin position="1"/>
        <end position="470"/>
    </location>
</feature>
<feature type="transmembrane region" description="Helical" evidence="2">
    <location>
        <begin position="44"/>
        <end position="64"/>
    </location>
</feature>
<accession>P9WNR1</accession>
<accession>L0TE61</accession>
<accession>O06317</accession>
<accession>Q7D5I7</accession>
<comment type="function">
    <text evidence="1">An ATPase (By similarity).</text>
</comment>
<comment type="subunit">
    <text evidence="1">Part of the ESX-4 / type VII secretion system (T7SS), which is composed of cytosolic and membrane components.</text>
</comment>
<comment type="subcellular location">
    <subcellularLocation>
        <location evidence="3">Cell membrane</location>
        <topology evidence="3">Single-pass membrane protein</topology>
    </subcellularLocation>
</comment>
<comment type="similarity">
    <text evidence="3">Belongs to the EccB family.</text>
</comment>
<organism>
    <name type="scientific">Mycobacterium tuberculosis (strain ATCC 25618 / H37Rv)</name>
    <dbReference type="NCBI Taxonomy" id="83332"/>
    <lineage>
        <taxon>Bacteria</taxon>
        <taxon>Bacillati</taxon>
        <taxon>Actinomycetota</taxon>
        <taxon>Actinomycetes</taxon>
        <taxon>Mycobacteriales</taxon>
        <taxon>Mycobacteriaceae</taxon>
        <taxon>Mycobacterium</taxon>
        <taxon>Mycobacterium tuberculosis complex</taxon>
    </lineage>
</organism>
<gene>
    <name type="primary">eccB4</name>
    <name type="ordered locus">Rv3450c</name>
</gene>